<gene>
    <name type="primary">PIKA</name>
    <name type="ordered locus">CAALFM_C501760CA</name>
    <name type="ORF">CaO19.3199</name>
</gene>
<keyword id="KW-0067">ATP-binding</keyword>
<keyword id="KW-0418">Kinase</keyword>
<keyword id="KW-0547">Nucleotide-binding</keyword>
<keyword id="KW-0539">Nucleus</keyword>
<keyword id="KW-1185">Reference proteome</keyword>
<keyword id="KW-0808">Transferase</keyword>
<reference key="1">
    <citation type="journal article" date="1999" name="Science">
        <title>Identification of a mating type-like locus in the asexual pathogenic yeast Candida albicans.</title>
        <authorList>
            <person name="Hull C.M."/>
            <person name="Johnson A.D."/>
        </authorList>
    </citation>
    <scope>NUCLEOTIDE SEQUENCE [GENOMIC DNA]</scope>
    <source>
        <strain>SC5314 / ATCC MYA-2876</strain>
    </source>
</reference>
<reference key="2">
    <citation type="journal article" date="2004" name="Proc. Natl. Acad. Sci. U.S.A.">
        <title>The diploid genome sequence of Candida albicans.</title>
        <authorList>
            <person name="Jones T."/>
            <person name="Federspiel N.A."/>
            <person name="Chibana H."/>
            <person name="Dungan J."/>
            <person name="Kalman S."/>
            <person name="Magee B.B."/>
            <person name="Newport G."/>
            <person name="Thorstenson Y.R."/>
            <person name="Agabian N."/>
            <person name="Magee P.T."/>
            <person name="Davis R.W."/>
            <person name="Scherer S."/>
        </authorList>
    </citation>
    <scope>NUCLEOTIDE SEQUENCE [LARGE SCALE GENOMIC DNA]</scope>
    <source>
        <strain>SC5314 / ATCC MYA-2876</strain>
    </source>
</reference>
<reference key="3">
    <citation type="journal article" date="2007" name="Genome Biol.">
        <title>Assembly of the Candida albicans genome into sixteen supercontigs aligned on the eight chromosomes.</title>
        <authorList>
            <person name="van het Hoog M."/>
            <person name="Rast T.J."/>
            <person name="Martchenko M."/>
            <person name="Grindle S."/>
            <person name="Dignard D."/>
            <person name="Hogues H."/>
            <person name="Cuomo C."/>
            <person name="Berriman M."/>
            <person name="Scherer S."/>
            <person name="Magee B.B."/>
            <person name="Whiteway M."/>
            <person name="Chibana H."/>
            <person name="Nantel A."/>
            <person name="Magee P.T."/>
        </authorList>
    </citation>
    <scope>GENOME REANNOTATION</scope>
    <source>
        <strain>SC5314 / ATCC MYA-2876</strain>
    </source>
</reference>
<reference key="4">
    <citation type="journal article" date="2013" name="Genome Biol.">
        <title>Assembly of a phased diploid Candida albicans genome facilitates allele-specific measurements and provides a simple model for repeat and indel structure.</title>
        <authorList>
            <person name="Muzzey D."/>
            <person name="Schwartz K."/>
            <person name="Weissman J.S."/>
            <person name="Sherlock G."/>
        </authorList>
    </citation>
    <scope>NUCLEOTIDE SEQUENCE [LARGE SCALE GENOMIC DNA]</scope>
    <scope>GENOME REANNOTATION</scope>
    <source>
        <strain>SC5314 / ATCC MYA-2876</strain>
    </source>
</reference>
<protein>
    <recommendedName>
        <fullName>Phosphatidylinositol 4-kinase PIK1a</fullName>
        <shortName>PI4-kinase</shortName>
        <shortName>PtdIns-4-kinase</shortName>
        <ecNumber>2.7.1.67</ecNumber>
    </recommendedName>
</protein>
<evidence type="ECO:0000250" key="1"/>
<evidence type="ECO:0000255" key="2">
    <source>
        <dbReference type="PROSITE-ProRule" id="PRU00269"/>
    </source>
</evidence>
<evidence type="ECO:0000255" key="3">
    <source>
        <dbReference type="PROSITE-ProRule" id="PRU00878"/>
    </source>
</evidence>
<evidence type="ECO:0000256" key="4">
    <source>
        <dbReference type="SAM" id="MobiDB-lite"/>
    </source>
</evidence>
<evidence type="ECO:0000305" key="5"/>
<proteinExistence type="inferred from homology"/>
<accession>Q9UW24</accession>
<accession>A0A1D8PNA2</accession>
<accession>Q59YI1</accession>
<organism>
    <name type="scientific">Candida albicans (strain SC5314 / ATCC MYA-2876)</name>
    <name type="common">Yeast</name>
    <dbReference type="NCBI Taxonomy" id="237561"/>
    <lineage>
        <taxon>Eukaryota</taxon>
        <taxon>Fungi</taxon>
        <taxon>Dikarya</taxon>
        <taxon>Ascomycota</taxon>
        <taxon>Saccharomycotina</taxon>
        <taxon>Pichiomycetes</taxon>
        <taxon>Debaryomycetaceae</taxon>
        <taxon>Candida/Lodderomyces clade</taxon>
        <taxon>Candida</taxon>
    </lineage>
</organism>
<comment type="function">
    <text evidence="1">Acts on phosphatidylinositol (PI) in the first committed step in the production of the second messenger inositol 1,4,5,-trisphosphate.</text>
</comment>
<comment type="catalytic activity">
    <reaction>
        <text>a 1,2-diacyl-sn-glycero-3-phospho-(1D-myo-inositol) + ATP = a 1,2-diacyl-sn-glycero-3-phospho-(1D-myo-inositol 4-phosphate) + ADP + H(+)</text>
        <dbReference type="Rhea" id="RHEA:19877"/>
        <dbReference type="ChEBI" id="CHEBI:15378"/>
        <dbReference type="ChEBI" id="CHEBI:30616"/>
        <dbReference type="ChEBI" id="CHEBI:57880"/>
        <dbReference type="ChEBI" id="CHEBI:58178"/>
        <dbReference type="ChEBI" id="CHEBI:456216"/>
        <dbReference type="EC" id="2.7.1.67"/>
    </reaction>
</comment>
<comment type="subcellular location">
    <subcellularLocation>
        <location evidence="1">Nucleus</location>
    </subcellularLocation>
</comment>
<comment type="miscellaneous">
    <text>The C.albicans mating-type-like (MTL) locus contains, in addition to the genes for the regulatory proteins (MTLA1, MTLA2, MTLALPHA1 and MTLALPHA2), a and alpha idiomorphs of a phosphatidylinositol kinase (PIKA and PIKALPHA), a poly(A) polymerase (PAPA and PAPALPHA) and an oxysterol binding protein-like protein (OBPA and OBPALPHA).</text>
</comment>
<comment type="similarity">
    <text evidence="5">Belongs to the PI3/PI4-kinase family. Type III PI4K subfamily.</text>
</comment>
<sequence length="956" mass="109252">MPVAPHELRDTIKSRDLGLFQCIDLLKQHNDNIGVHHQLVQKLYSYSYDELEFFIPQFIQLLVNFETDSMALEDFLLHYCNQFPHFSLIVFWYLQAFLFELRNEPKSYSFQTVRKFINKLQNILFNVETSFHIRGPEFRENMQPALILCGSVASAFSSPLVNEYALPIVRSQGKQQKSFVFKLASFQKSLTRNLTMKNQRLSADAITPVISDDDSKVSNRIQESQRLKTKYSKKKISAALQLDDSENYTTDEEELGYVQTLSRPKIREMKYTEVEENLKINTIIRSKKNRSKTTVNSISFFSDTDQSASMEEYNRSAQSLPELVRTRSRLDLYSSESEAALGTSRNSAELIISKKKFMGSEVKTRPYKELLKILQVNYSKKETSFIMSLQNISLRLSSVPKVARLSALRAELSIINESILPSEIDIPQLLPVTSNKNKKFHKILKLNINEACVLNSAERVPYLLLIEYLSDEIDFNPFSDQNQKIINDCVRKPEVKPNDQISGDDDTSVVSSIQEEMFLDNNASENYNEDGDLGEISLLHSRSSSRDWAKSTPGSPVARSSQEDEKFYGNVSSTTGGTIESSVLADQMRIASLMLQQLESSGQSNTQQFVSIRNRIIESMISLQDQFDFIDYETLKELKTDEQDAGKRKLENDFKLAEDWNEKKHRIRKSSIYGHLENWDLCSVIVKNGDDLPQEAFACQLISLISNIWKKHKVDFWTKRMKILITSANAGLVETITNAMSIHSIKKSLTELSIENGENAKGRIFTLKDYFQKLYGSVDSSKYVKAQENFAISLASYSIICYVLQIKDRHNGNIMLDHEGHIIHIDFGFLLSNSPGSVGFEAAPFKLTSEYVEVLGGLESKAYLKFVDTCKNCFKALRKEWGQIVSIVELMQKGSSLPCFNNGDNTSVLLQQRLQLHLSDEEIDSFIEVYLIEKSVGSMYTRLYDQFQMITQGIYS</sequence>
<dbReference type="EC" id="2.7.1.67"/>
<dbReference type="EMBL" id="AF167162">
    <property type="protein sequence ID" value="AAD51405.1"/>
    <property type="molecule type" value="Genomic_DNA"/>
</dbReference>
<dbReference type="EMBL" id="CP017627">
    <property type="protein sequence ID" value="AOW29607.1"/>
    <property type="molecule type" value="Genomic_DNA"/>
</dbReference>
<dbReference type="RefSeq" id="XP_714615.1">
    <property type="nucleotide sequence ID" value="XM_709522.1"/>
</dbReference>
<dbReference type="FunCoup" id="Q9UW24">
    <property type="interactions" value="880"/>
</dbReference>
<dbReference type="STRING" id="237561.Q9UW24"/>
<dbReference type="EnsemblFungi" id="C5_01760C_A-T">
    <property type="protein sequence ID" value="C5_01760C_A-T-p1"/>
    <property type="gene ID" value="C5_01760C_A"/>
</dbReference>
<dbReference type="GeneID" id="3643765"/>
<dbReference type="KEGG" id="cal:CAALFM_C501760CA"/>
<dbReference type="CGD" id="CAL0000190377">
    <property type="gene designation" value="PIKA"/>
</dbReference>
<dbReference type="VEuPathDB" id="FungiDB:C5_01760C_A"/>
<dbReference type="HOGENOM" id="CLU_002446_2_0_1"/>
<dbReference type="InParanoid" id="Q9UW24"/>
<dbReference type="OMA" id="TQDYVDV"/>
<dbReference type="OrthoDB" id="10264149at2759"/>
<dbReference type="Proteomes" id="UP000000559">
    <property type="component" value="Chromosome 5"/>
</dbReference>
<dbReference type="GO" id="GO:0005737">
    <property type="term" value="C:cytoplasm"/>
    <property type="evidence" value="ECO:0000318"/>
    <property type="project" value="GO_Central"/>
</dbReference>
<dbReference type="GO" id="GO:0016020">
    <property type="term" value="C:membrane"/>
    <property type="evidence" value="ECO:0000318"/>
    <property type="project" value="GO_Central"/>
</dbReference>
<dbReference type="GO" id="GO:0005634">
    <property type="term" value="C:nucleus"/>
    <property type="evidence" value="ECO:0007669"/>
    <property type="project" value="UniProtKB-SubCell"/>
</dbReference>
<dbReference type="GO" id="GO:0005802">
    <property type="term" value="C:trans-Golgi network"/>
    <property type="evidence" value="ECO:0007669"/>
    <property type="project" value="EnsemblFungi"/>
</dbReference>
<dbReference type="GO" id="GO:0004430">
    <property type="term" value="F:1-phosphatidylinositol 4-kinase activity"/>
    <property type="evidence" value="ECO:0000318"/>
    <property type="project" value="GO_Central"/>
</dbReference>
<dbReference type="GO" id="GO:0005524">
    <property type="term" value="F:ATP binding"/>
    <property type="evidence" value="ECO:0007669"/>
    <property type="project" value="UniProtKB-KW"/>
</dbReference>
<dbReference type="GO" id="GO:0006995">
    <property type="term" value="P:cellular response to nitrogen starvation"/>
    <property type="evidence" value="ECO:0007669"/>
    <property type="project" value="EnsemblFungi"/>
</dbReference>
<dbReference type="GO" id="GO:0006897">
    <property type="term" value="P:endocytosis"/>
    <property type="evidence" value="ECO:0007669"/>
    <property type="project" value="EnsemblFungi"/>
</dbReference>
<dbReference type="GO" id="GO:0044182">
    <property type="term" value="P:filamentous growth of a population of unicellular organisms"/>
    <property type="evidence" value="ECO:0000316"/>
    <property type="project" value="CGD"/>
</dbReference>
<dbReference type="GO" id="GO:0043001">
    <property type="term" value="P:Golgi to plasma membrane protein transport"/>
    <property type="evidence" value="ECO:0000316"/>
    <property type="project" value="CGD"/>
</dbReference>
<dbReference type="GO" id="GO:0140504">
    <property type="term" value="P:microlipophagy"/>
    <property type="evidence" value="ECO:0007669"/>
    <property type="project" value="EnsemblFungi"/>
</dbReference>
<dbReference type="GO" id="GO:0046854">
    <property type="term" value="P:phosphatidylinositol phosphate biosynthetic process"/>
    <property type="evidence" value="ECO:0000318"/>
    <property type="project" value="GO_Central"/>
</dbReference>
<dbReference type="GO" id="GO:0048015">
    <property type="term" value="P:phosphatidylinositol-mediated signaling"/>
    <property type="evidence" value="ECO:0000318"/>
    <property type="project" value="GO_Central"/>
</dbReference>
<dbReference type="GO" id="GO:2000786">
    <property type="term" value="P:positive regulation of autophagosome assembly"/>
    <property type="evidence" value="ECO:0007669"/>
    <property type="project" value="EnsemblFungi"/>
</dbReference>
<dbReference type="GO" id="GO:0042998">
    <property type="term" value="P:positive regulation of Golgi to plasma membrane protein transport"/>
    <property type="evidence" value="ECO:0007669"/>
    <property type="project" value="EnsemblFungi"/>
</dbReference>
<dbReference type="GO" id="GO:0050714">
    <property type="term" value="P:positive regulation of protein secretion"/>
    <property type="evidence" value="ECO:0007669"/>
    <property type="project" value="EnsemblFungi"/>
</dbReference>
<dbReference type="GO" id="GO:0044011">
    <property type="term" value="P:single-species biofilm formation on inanimate substrate"/>
    <property type="evidence" value="ECO:0000315"/>
    <property type="project" value="CGD"/>
</dbReference>
<dbReference type="CDD" id="cd05168">
    <property type="entry name" value="PI4Kc_III_beta"/>
    <property type="match status" value="1"/>
</dbReference>
<dbReference type="FunFam" id="3.30.1010.10:FF:000021">
    <property type="entry name" value="Phosphatidylinositol 4-kinase"/>
    <property type="match status" value="1"/>
</dbReference>
<dbReference type="FunFam" id="1.10.1070.11:FF:000016">
    <property type="entry name" value="PIK1p Phosphatidylinositol 4-kinase"/>
    <property type="match status" value="1"/>
</dbReference>
<dbReference type="Gene3D" id="6.10.140.1260">
    <property type="match status" value="1"/>
</dbReference>
<dbReference type="Gene3D" id="1.10.1070.11">
    <property type="entry name" value="Phosphatidylinositol 3-/4-kinase, catalytic domain"/>
    <property type="match status" value="1"/>
</dbReference>
<dbReference type="Gene3D" id="3.30.1010.10">
    <property type="entry name" value="Phosphatidylinositol 3-kinase Catalytic Subunit, Chain A, domain 4"/>
    <property type="match status" value="1"/>
</dbReference>
<dbReference type="Gene3D" id="1.25.40.70">
    <property type="entry name" value="Phosphatidylinositol 3-kinase, accessory domain (PIK)"/>
    <property type="match status" value="1"/>
</dbReference>
<dbReference type="InterPro" id="IPR016024">
    <property type="entry name" value="ARM-type_fold"/>
</dbReference>
<dbReference type="InterPro" id="IPR011009">
    <property type="entry name" value="Kinase-like_dom_sf"/>
</dbReference>
<dbReference type="InterPro" id="IPR021601">
    <property type="entry name" value="Phosphatidylino_kinase_fungi"/>
</dbReference>
<dbReference type="InterPro" id="IPR000403">
    <property type="entry name" value="PI3/4_kinase_cat_dom"/>
</dbReference>
<dbReference type="InterPro" id="IPR036940">
    <property type="entry name" value="PI3/4_kinase_cat_sf"/>
</dbReference>
<dbReference type="InterPro" id="IPR018936">
    <property type="entry name" value="PI3/4_kinase_CS"/>
</dbReference>
<dbReference type="InterPro" id="IPR001263">
    <property type="entry name" value="PI3K_accessory_dom"/>
</dbReference>
<dbReference type="InterPro" id="IPR042236">
    <property type="entry name" value="PI3K_accessory_sf"/>
</dbReference>
<dbReference type="InterPro" id="IPR049160">
    <property type="entry name" value="PI4KB-PIK1_PIK"/>
</dbReference>
<dbReference type="InterPro" id="IPR015433">
    <property type="entry name" value="PI_Kinase"/>
</dbReference>
<dbReference type="PANTHER" id="PTHR10048:SF22">
    <property type="entry name" value="PHOSPHATIDYLINOSITOL 4-KINASE BETA"/>
    <property type="match status" value="1"/>
</dbReference>
<dbReference type="PANTHER" id="PTHR10048">
    <property type="entry name" value="PHOSPHATIDYLINOSITOL KINASE"/>
    <property type="match status" value="1"/>
</dbReference>
<dbReference type="Pfam" id="PF00454">
    <property type="entry name" value="PI3_PI4_kinase"/>
    <property type="match status" value="1"/>
</dbReference>
<dbReference type="Pfam" id="PF21245">
    <property type="entry name" value="PI4KB-PIK1_PIK"/>
    <property type="match status" value="1"/>
</dbReference>
<dbReference type="Pfam" id="PF11522">
    <property type="entry name" value="Pik1"/>
    <property type="match status" value="1"/>
</dbReference>
<dbReference type="SMART" id="SM00146">
    <property type="entry name" value="PI3Kc"/>
    <property type="match status" value="1"/>
</dbReference>
<dbReference type="SUPFAM" id="SSF48371">
    <property type="entry name" value="ARM repeat"/>
    <property type="match status" value="1"/>
</dbReference>
<dbReference type="SUPFAM" id="SSF56112">
    <property type="entry name" value="Protein kinase-like (PK-like)"/>
    <property type="match status" value="1"/>
</dbReference>
<dbReference type="PROSITE" id="PS00916">
    <property type="entry name" value="PI3_4_KINASE_2"/>
    <property type="match status" value="1"/>
</dbReference>
<dbReference type="PROSITE" id="PS50290">
    <property type="entry name" value="PI3_4_KINASE_3"/>
    <property type="match status" value="1"/>
</dbReference>
<dbReference type="PROSITE" id="PS51545">
    <property type="entry name" value="PIK_HELICAL"/>
    <property type="match status" value="1"/>
</dbReference>
<name>PIK1A_CANAL</name>
<feature type="chain" id="PRO_0000088833" description="Phosphatidylinositol 4-kinase PIK1a">
    <location>
        <begin position="1"/>
        <end position="956"/>
    </location>
</feature>
<feature type="domain" description="PIK helical" evidence="3">
    <location>
        <begin position="1"/>
        <end position="120"/>
    </location>
</feature>
<feature type="domain" description="PI3K/PI4K catalytic" evidence="2">
    <location>
        <begin position="658"/>
        <end position="939"/>
    </location>
</feature>
<feature type="region of interest" description="Disordered" evidence="4">
    <location>
        <begin position="545"/>
        <end position="573"/>
    </location>
</feature>
<feature type="region of interest" description="G-loop" evidence="2">
    <location>
        <begin position="664"/>
        <end position="670"/>
    </location>
</feature>
<feature type="region of interest" description="Catalytic loop" evidence="2">
    <location>
        <begin position="805"/>
        <end position="813"/>
    </location>
</feature>
<feature type="region of interest" description="Activation loop" evidence="2">
    <location>
        <begin position="824"/>
        <end position="848"/>
    </location>
</feature>